<evidence type="ECO:0000255" key="1">
    <source>
        <dbReference type="HAMAP-Rule" id="MF_01147"/>
    </source>
</evidence>
<comment type="function">
    <text evidence="1">Catalyzes the transfer of the diacylglyceryl group from phosphatidylglycerol to the sulfhydryl group of the N-terminal cysteine of a prolipoprotein, the first step in the formation of mature lipoproteins.</text>
</comment>
<comment type="catalytic activity">
    <reaction evidence="1">
        <text>L-cysteinyl-[prolipoprotein] + a 1,2-diacyl-sn-glycero-3-phospho-(1'-sn-glycerol) = an S-1,2-diacyl-sn-glyceryl-L-cysteinyl-[prolipoprotein] + sn-glycerol 1-phosphate + H(+)</text>
        <dbReference type="Rhea" id="RHEA:56712"/>
        <dbReference type="Rhea" id="RHEA-COMP:14679"/>
        <dbReference type="Rhea" id="RHEA-COMP:14680"/>
        <dbReference type="ChEBI" id="CHEBI:15378"/>
        <dbReference type="ChEBI" id="CHEBI:29950"/>
        <dbReference type="ChEBI" id="CHEBI:57685"/>
        <dbReference type="ChEBI" id="CHEBI:64716"/>
        <dbReference type="ChEBI" id="CHEBI:140658"/>
        <dbReference type="EC" id="2.5.1.145"/>
    </reaction>
</comment>
<comment type="pathway">
    <text evidence="1">Protein modification; lipoprotein biosynthesis (diacylglyceryl transfer).</text>
</comment>
<comment type="subcellular location">
    <subcellularLocation>
        <location evidence="1">Cell inner membrane</location>
        <topology evidence="1">Multi-pass membrane protein</topology>
    </subcellularLocation>
</comment>
<comment type="similarity">
    <text evidence="1">Belongs to the Lgt family.</text>
</comment>
<organism>
    <name type="scientific">Shigella boydii serotype 18 (strain CDC 3083-94 / BS512)</name>
    <dbReference type="NCBI Taxonomy" id="344609"/>
    <lineage>
        <taxon>Bacteria</taxon>
        <taxon>Pseudomonadati</taxon>
        <taxon>Pseudomonadota</taxon>
        <taxon>Gammaproteobacteria</taxon>
        <taxon>Enterobacterales</taxon>
        <taxon>Enterobacteriaceae</taxon>
        <taxon>Shigella</taxon>
    </lineage>
</organism>
<dbReference type="EC" id="2.5.1.145" evidence="1"/>
<dbReference type="EMBL" id="CP001063">
    <property type="protein sequence ID" value="ACD07307.1"/>
    <property type="molecule type" value="Genomic_DNA"/>
</dbReference>
<dbReference type="RefSeq" id="WP_000204658.1">
    <property type="nucleotide sequence ID" value="NC_010658.1"/>
</dbReference>
<dbReference type="SMR" id="B2TYR3"/>
<dbReference type="STRING" id="344609.SbBS512_E3034"/>
<dbReference type="GeneID" id="93779170"/>
<dbReference type="KEGG" id="sbc:SbBS512_E3034"/>
<dbReference type="HOGENOM" id="CLU_013386_1_0_6"/>
<dbReference type="UniPathway" id="UPA00664"/>
<dbReference type="Proteomes" id="UP000001030">
    <property type="component" value="Chromosome"/>
</dbReference>
<dbReference type="GO" id="GO:0005886">
    <property type="term" value="C:plasma membrane"/>
    <property type="evidence" value="ECO:0007669"/>
    <property type="project" value="UniProtKB-SubCell"/>
</dbReference>
<dbReference type="GO" id="GO:0008961">
    <property type="term" value="F:phosphatidylglycerol-prolipoprotein diacylglyceryl transferase activity"/>
    <property type="evidence" value="ECO:0007669"/>
    <property type="project" value="UniProtKB-UniRule"/>
</dbReference>
<dbReference type="GO" id="GO:0042158">
    <property type="term" value="P:lipoprotein biosynthetic process"/>
    <property type="evidence" value="ECO:0007669"/>
    <property type="project" value="UniProtKB-UniRule"/>
</dbReference>
<dbReference type="HAMAP" id="MF_01147">
    <property type="entry name" value="Lgt"/>
    <property type="match status" value="1"/>
</dbReference>
<dbReference type="InterPro" id="IPR001640">
    <property type="entry name" value="Lgt"/>
</dbReference>
<dbReference type="NCBIfam" id="TIGR00544">
    <property type="entry name" value="lgt"/>
    <property type="match status" value="1"/>
</dbReference>
<dbReference type="PANTHER" id="PTHR30589:SF0">
    <property type="entry name" value="PHOSPHATIDYLGLYCEROL--PROLIPOPROTEIN DIACYLGLYCERYL TRANSFERASE"/>
    <property type="match status" value="1"/>
</dbReference>
<dbReference type="PANTHER" id="PTHR30589">
    <property type="entry name" value="PROLIPOPROTEIN DIACYLGLYCERYL TRANSFERASE"/>
    <property type="match status" value="1"/>
</dbReference>
<dbReference type="Pfam" id="PF01790">
    <property type="entry name" value="LGT"/>
    <property type="match status" value="1"/>
</dbReference>
<dbReference type="PROSITE" id="PS01311">
    <property type="entry name" value="LGT"/>
    <property type="match status" value="1"/>
</dbReference>
<accession>B2TYR3</accession>
<reference key="1">
    <citation type="submission" date="2008-05" db="EMBL/GenBank/DDBJ databases">
        <title>Complete sequence of Shigella boydii serotype 18 strain BS512.</title>
        <authorList>
            <person name="Rasko D.A."/>
            <person name="Rosovitz M."/>
            <person name="Maurelli A.T."/>
            <person name="Myers G."/>
            <person name="Seshadri R."/>
            <person name="Cer R."/>
            <person name="Jiang L."/>
            <person name="Ravel J."/>
            <person name="Sebastian Y."/>
        </authorList>
    </citation>
    <scope>NUCLEOTIDE SEQUENCE [LARGE SCALE GENOMIC DNA]</scope>
    <source>
        <strain>CDC 3083-94 / BS512</strain>
    </source>
</reference>
<feature type="chain" id="PRO_1000137459" description="Phosphatidylglycerol--prolipoprotein diacylglyceryl transferase">
    <location>
        <begin position="1"/>
        <end position="291"/>
    </location>
</feature>
<feature type="transmembrane region" description="Helical" evidence="1">
    <location>
        <begin position="21"/>
        <end position="41"/>
    </location>
</feature>
<feature type="transmembrane region" description="Helical" evidence="1">
    <location>
        <begin position="60"/>
        <end position="80"/>
    </location>
</feature>
<feature type="transmembrane region" description="Helical" evidence="1">
    <location>
        <begin position="96"/>
        <end position="116"/>
    </location>
</feature>
<feature type="transmembrane region" description="Helical" evidence="1">
    <location>
        <begin position="130"/>
        <end position="150"/>
    </location>
</feature>
<feature type="transmembrane region" description="Helical" evidence="1">
    <location>
        <begin position="198"/>
        <end position="218"/>
    </location>
</feature>
<feature type="transmembrane region" description="Helical" evidence="1">
    <location>
        <begin position="225"/>
        <end position="245"/>
    </location>
</feature>
<feature type="transmembrane region" description="Helical" evidence="1">
    <location>
        <begin position="260"/>
        <end position="280"/>
    </location>
</feature>
<feature type="binding site" evidence="1">
    <location>
        <position position="143"/>
    </location>
    <ligand>
        <name>a 1,2-diacyl-sn-glycero-3-phospho-(1'-sn-glycerol)</name>
        <dbReference type="ChEBI" id="CHEBI:64716"/>
    </ligand>
</feature>
<sequence length="291" mass="33108">MTSSYLHFPEFDPVIFSIGPVALHWYGLMYLVGFIFAMWLATRRANRPGSGWTKNEVENLLYAGFLGVFLGGRIGYVLFYNFPQFMADPLYLFRVWDGGMSFHGGLIGVIVVMIIFARRTKRSFFQVSDFIAPLIPFGLGAGRLGNFINGELWGRVDPNFPFAMLFPGSRTEDILLLQTNPQWQSIFDTYGVLPRHPSQLYELLLEGVVLFIILNLYIRKPRPMGAVSGLFLIGYGAFRIIVEFFRQPDAQFTGAWVQYISMGQILSIPMIVAGVIMMVWAYRRSPQQHVS</sequence>
<protein>
    <recommendedName>
        <fullName evidence="1">Phosphatidylglycerol--prolipoprotein diacylglyceryl transferase</fullName>
        <ecNumber evidence="1">2.5.1.145</ecNumber>
    </recommendedName>
</protein>
<gene>
    <name evidence="1" type="primary">lgt</name>
    <name type="ordered locus">SbBS512_E3034</name>
</gene>
<name>LGT_SHIB3</name>
<proteinExistence type="inferred from homology"/>
<keyword id="KW-0997">Cell inner membrane</keyword>
<keyword id="KW-1003">Cell membrane</keyword>
<keyword id="KW-0472">Membrane</keyword>
<keyword id="KW-1185">Reference proteome</keyword>
<keyword id="KW-0808">Transferase</keyword>
<keyword id="KW-0812">Transmembrane</keyword>
<keyword id="KW-1133">Transmembrane helix</keyword>